<sequence length="381" mass="43103">MATNIRKTHPLLKIVNHALIDLPAPSNISVWWNFGSLLGLCLIMQIITGLFLAMHYTADISMAFSSVIHISRDVNYGWLMRNIHAYGASFFFICIYLHIARGLYYGSYLNKEAWNIGVVLLFLLMATAFVGYVLPWGQMSFWGATVITNLLSAFPYIGNLLVQWIWGGFSVDNATLTRFFAFHFLLPFLILALSVIHILFLHETGANNPMGINSNTDKISFHPYFSYKDLFGFLIVITLLATLALFMPNLLGDAENFIPANPLVTPLHIQPEWYFLFAYAILRSIPNKLGGVLALLFSIFILLLVPLLHTSKLRSNIFRPLTQIFFWSLVTNAIILTWIGGQPVEQPFIMVGQIASVAYFSLFLFVIPITSWCENKFLSLN</sequence>
<keyword id="KW-0249">Electron transport</keyword>
<keyword id="KW-0349">Heme</keyword>
<keyword id="KW-0408">Iron</keyword>
<keyword id="KW-0472">Membrane</keyword>
<keyword id="KW-0479">Metal-binding</keyword>
<keyword id="KW-0496">Mitochondrion</keyword>
<keyword id="KW-0999">Mitochondrion inner membrane</keyword>
<keyword id="KW-0679">Respiratory chain</keyword>
<keyword id="KW-0812">Transmembrane</keyword>
<keyword id="KW-1133">Transmembrane helix</keyword>
<keyword id="KW-0813">Transport</keyword>
<keyword id="KW-0830">Ubiquinone</keyword>
<dbReference type="EMBL" id="Y16067">
    <property type="protein sequence ID" value="CAA76031.1"/>
    <property type="molecule type" value="Genomic_DNA"/>
</dbReference>
<dbReference type="PIR" id="T11312">
    <property type="entry name" value="T11312"/>
</dbReference>
<dbReference type="RefSeq" id="NP_007626.1">
    <property type="nucleotide sequence ID" value="NC_001950.1"/>
</dbReference>
<dbReference type="SMR" id="O79413"/>
<dbReference type="GeneID" id="808292"/>
<dbReference type="CTD" id="4519"/>
<dbReference type="OrthoDB" id="244at2759"/>
<dbReference type="GO" id="GO:0005743">
    <property type="term" value="C:mitochondrial inner membrane"/>
    <property type="evidence" value="ECO:0007669"/>
    <property type="project" value="UniProtKB-SubCell"/>
</dbReference>
<dbReference type="GO" id="GO:0045275">
    <property type="term" value="C:respiratory chain complex III"/>
    <property type="evidence" value="ECO:0007669"/>
    <property type="project" value="InterPro"/>
</dbReference>
<dbReference type="GO" id="GO:0046872">
    <property type="term" value="F:metal ion binding"/>
    <property type="evidence" value="ECO:0007669"/>
    <property type="project" value="UniProtKB-KW"/>
</dbReference>
<dbReference type="GO" id="GO:0008121">
    <property type="term" value="F:ubiquinol-cytochrome-c reductase activity"/>
    <property type="evidence" value="ECO:0007669"/>
    <property type="project" value="InterPro"/>
</dbReference>
<dbReference type="GO" id="GO:0006122">
    <property type="term" value="P:mitochondrial electron transport, ubiquinol to cytochrome c"/>
    <property type="evidence" value="ECO:0007669"/>
    <property type="project" value="TreeGrafter"/>
</dbReference>
<dbReference type="CDD" id="cd00290">
    <property type="entry name" value="cytochrome_b_C"/>
    <property type="match status" value="1"/>
</dbReference>
<dbReference type="CDD" id="cd00284">
    <property type="entry name" value="Cytochrome_b_N"/>
    <property type="match status" value="1"/>
</dbReference>
<dbReference type="FunFam" id="1.20.810.10:FF:000002">
    <property type="entry name" value="Cytochrome b"/>
    <property type="match status" value="1"/>
</dbReference>
<dbReference type="Gene3D" id="1.20.810.10">
    <property type="entry name" value="Cytochrome Bc1 Complex, Chain C"/>
    <property type="match status" value="1"/>
</dbReference>
<dbReference type="InterPro" id="IPR005798">
    <property type="entry name" value="Cyt_b/b6_C"/>
</dbReference>
<dbReference type="InterPro" id="IPR036150">
    <property type="entry name" value="Cyt_b/b6_C_sf"/>
</dbReference>
<dbReference type="InterPro" id="IPR005797">
    <property type="entry name" value="Cyt_b/b6_N"/>
</dbReference>
<dbReference type="InterPro" id="IPR027387">
    <property type="entry name" value="Cytb/b6-like_sf"/>
</dbReference>
<dbReference type="InterPro" id="IPR030689">
    <property type="entry name" value="Cytochrome_b"/>
</dbReference>
<dbReference type="InterPro" id="IPR048260">
    <property type="entry name" value="Cytochrome_b_C_euk/bac"/>
</dbReference>
<dbReference type="InterPro" id="IPR048259">
    <property type="entry name" value="Cytochrome_b_N_euk/bac"/>
</dbReference>
<dbReference type="InterPro" id="IPR016174">
    <property type="entry name" value="Di-haem_cyt_TM"/>
</dbReference>
<dbReference type="PANTHER" id="PTHR19271">
    <property type="entry name" value="CYTOCHROME B"/>
    <property type="match status" value="1"/>
</dbReference>
<dbReference type="PANTHER" id="PTHR19271:SF16">
    <property type="entry name" value="CYTOCHROME B"/>
    <property type="match status" value="1"/>
</dbReference>
<dbReference type="Pfam" id="PF00032">
    <property type="entry name" value="Cytochrom_B_C"/>
    <property type="match status" value="1"/>
</dbReference>
<dbReference type="Pfam" id="PF00033">
    <property type="entry name" value="Cytochrome_B"/>
    <property type="match status" value="1"/>
</dbReference>
<dbReference type="PIRSF" id="PIRSF038885">
    <property type="entry name" value="COB"/>
    <property type="match status" value="1"/>
</dbReference>
<dbReference type="SUPFAM" id="SSF81648">
    <property type="entry name" value="a domain/subunit of cytochrome bc1 complex (Ubiquinol-cytochrome c reductase)"/>
    <property type="match status" value="1"/>
</dbReference>
<dbReference type="SUPFAM" id="SSF81342">
    <property type="entry name" value="Transmembrane di-heme cytochromes"/>
    <property type="match status" value="1"/>
</dbReference>
<dbReference type="PROSITE" id="PS51003">
    <property type="entry name" value="CYTB_CTER"/>
    <property type="match status" value="1"/>
</dbReference>
<dbReference type="PROSITE" id="PS51002">
    <property type="entry name" value="CYTB_NTER"/>
    <property type="match status" value="1"/>
</dbReference>
<gene>
    <name type="primary">mt-cyb</name>
    <name type="synonym">cob</name>
    <name type="synonym">cytb</name>
    <name type="synonym">mtcyb</name>
</gene>
<reference key="1">
    <citation type="journal article" date="1998" name="Genetics">
        <title>The complete nucleotide sequence of the mitochondrial DNA of the dogfish, Scyliorhinus canicula.</title>
        <authorList>
            <person name="Delarbre C."/>
            <person name="Spruyt N."/>
            <person name="Delmarre C."/>
            <person name="Gallut C."/>
            <person name="Barriel V."/>
            <person name="Janvier P."/>
            <person name="Laudet V."/>
            <person name="Gachelin G."/>
        </authorList>
    </citation>
    <scope>NUCLEOTIDE SEQUENCE [GENOMIC DNA]</scope>
    <source>
        <tissue>Muscle</tissue>
    </source>
</reference>
<geneLocation type="mitochondrion"/>
<accession>O79413</accession>
<feature type="chain" id="PRO_0000061532" description="Cytochrome b">
    <location>
        <begin position="1"/>
        <end position="381"/>
    </location>
</feature>
<feature type="transmembrane region" description="Helical" evidence="2">
    <location>
        <begin position="34"/>
        <end position="54"/>
    </location>
</feature>
<feature type="transmembrane region" description="Helical" evidence="2">
    <location>
        <begin position="78"/>
        <end position="99"/>
    </location>
</feature>
<feature type="transmembrane region" description="Helical" evidence="2">
    <location>
        <begin position="114"/>
        <end position="134"/>
    </location>
</feature>
<feature type="transmembrane region" description="Helical" evidence="2">
    <location>
        <begin position="179"/>
        <end position="199"/>
    </location>
</feature>
<feature type="transmembrane region" description="Helical" evidence="2">
    <location>
        <begin position="227"/>
        <end position="247"/>
    </location>
</feature>
<feature type="transmembrane region" description="Helical" evidence="2">
    <location>
        <begin position="289"/>
        <end position="309"/>
    </location>
</feature>
<feature type="transmembrane region" description="Helical" evidence="2">
    <location>
        <begin position="321"/>
        <end position="341"/>
    </location>
</feature>
<feature type="transmembrane region" description="Helical" evidence="2">
    <location>
        <begin position="348"/>
        <end position="368"/>
    </location>
</feature>
<feature type="binding site" description="axial binding residue" evidence="2">
    <location>
        <position position="84"/>
    </location>
    <ligand>
        <name>heme b</name>
        <dbReference type="ChEBI" id="CHEBI:60344"/>
        <label>b562</label>
    </ligand>
    <ligandPart>
        <name>Fe</name>
        <dbReference type="ChEBI" id="CHEBI:18248"/>
    </ligandPart>
</feature>
<feature type="binding site" description="axial binding residue" evidence="2">
    <location>
        <position position="98"/>
    </location>
    <ligand>
        <name>heme b</name>
        <dbReference type="ChEBI" id="CHEBI:60344"/>
        <label>b566</label>
    </ligand>
    <ligandPart>
        <name>Fe</name>
        <dbReference type="ChEBI" id="CHEBI:18248"/>
    </ligandPart>
</feature>
<feature type="binding site" description="axial binding residue" evidence="2">
    <location>
        <position position="183"/>
    </location>
    <ligand>
        <name>heme b</name>
        <dbReference type="ChEBI" id="CHEBI:60344"/>
        <label>b562</label>
    </ligand>
    <ligandPart>
        <name>Fe</name>
        <dbReference type="ChEBI" id="CHEBI:18248"/>
    </ligandPart>
</feature>
<feature type="binding site" description="axial binding residue" evidence="2">
    <location>
        <position position="197"/>
    </location>
    <ligand>
        <name>heme b</name>
        <dbReference type="ChEBI" id="CHEBI:60344"/>
        <label>b566</label>
    </ligand>
    <ligandPart>
        <name>Fe</name>
        <dbReference type="ChEBI" id="CHEBI:18248"/>
    </ligandPart>
</feature>
<feature type="binding site" evidence="2">
    <location>
        <position position="202"/>
    </location>
    <ligand>
        <name>a ubiquinone</name>
        <dbReference type="ChEBI" id="CHEBI:16389"/>
    </ligand>
</feature>
<organism>
    <name type="scientific">Scyliorhinus canicula</name>
    <name type="common">Small-spotted catshark</name>
    <name type="synonym">Squalus canicula</name>
    <dbReference type="NCBI Taxonomy" id="7830"/>
    <lineage>
        <taxon>Eukaryota</taxon>
        <taxon>Metazoa</taxon>
        <taxon>Chordata</taxon>
        <taxon>Craniata</taxon>
        <taxon>Vertebrata</taxon>
        <taxon>Chondrichthyes</taxon>
        <taxon>Elasmobranchii</taxon>
        <taxon>Galeomorphii</taxon>
        <taxon>Galeoidea</taxon>
        <taxon>Carcharhiniformes</taxon>
        <taxon>Scyliorhinidae</taxon>
        <taxon>Scyliorhinus</taxon>
    </lineage>
</organism>
<protein>
    <recommendedName>
        <fullName>Cytochrome b</fullName>
    </recommendedName>
    <alternativeName>
        <fullName>Complex III subunit 3</fullName>
    </alternativeName>
    <alternativeName>
        <fullName>Complex III subunit III</fullName>
    </alternativeName>
    <alternativeName>
        <fullName>Cytochrome b-c1 complex subunit 3</fullName>
    </alternativeName>
    <alternativeName>
        <fullName>Ubiquinol-cytochrome-c reductase complex cytochrome b subunit</fullName>
    </alternativeName>
</protein>
<name>CYB_SCYCA</name>
<proteinExistence type="inferred from homology"/>
<comment type="function">
    <text evidence="2">Component of the ubiquinol-cytochrome c reductase complex (complex III or cytochrome b-c1 complex) that is part of the mitochondrial respiratory chain. The b-c1 complex mediates electron transfer from ubiquinol to cytochrome c. Contributes to the generation of a proton gradient across the mitochondrial membrane that is then used for ATP synthesis.</text>
</comment>
<comment type="cofactor">
    <cofactor evidence="2">
        <name>heme b</name>
        <dbReference type="ChEBI" id="CHEBI:60344"/>
    </cofactor>
    <text evidence="2">Binds 2 heme b groups non-covalently.</text>
</comment>
<comment type="subunit">
    <text evidence="2">The cytochrome bc1 complex contains 3 respiratory subunits (MT-CYB, CYC1 and UQCRFS1), 2 core proteins (UQCRC1 and UQCRC2) and probably 6 low-molecular weight proteins.</text>
</comment>
<comment type="subcellular location">
    <subcellularLocation>
        <location evidence="2">Mitochondrion inner membrane</location>
        <topology evidence="2">Multi-pass membrane protein</topology>
    </subcellularLocation>
</comment>
<comment type="miscellaneous">
    <text evidence="1">Heme 1 (or BL or b562) is low-potential and absorbs at about 562 nm, and heme 2 (or BH or b566) is high-potential and absorbs at about 566 nm.</text>
</comment>
<comment type="similarity">
    <text evidence="3 4">Belongs to the cytochrome b family.</text>
</comment>
<comment type="caution">
    <text evidence="2">The full-length protein contains only eight transmembrane helices, not nine as predicted by bioinformatics tools.</text>
</comment>
<evidence type="ECO:0000250" key="1"/>
<evidence type="ECO:0000250" key="2">
    <source>
        <dbReference type="UniProtKB" id="P00157"/>
    </source>
</evidence>
<evidence type="ECO:0000255" key="3">
    <source>
        <dbReference type="PROSITE-ProRule" id="PRU00967"/>
    </source>
</evidence>
<evidence type="ECO:0000255" key="4">
    <source>
        <dbReference type="PROSITE-ProRule" id="PRU00968"/>
    </source>
</evidence>